<proteinExistence type="inferred from homology"/>
<dbReference type="EC" id="2.3.3.13" evidence="1"/>
<dbReference type="EMBL" id="CP000305">
    <property type="protein sequence ID" value="ABG16735.1"/>
    <property type="molecule type" value="Genomic_DNA"/>
</dbReference>
<dbReference type="EMBL" id="ACNQ01000006">
    <property type="protein sequence ID" value="EEO78190.1"/>
    <property type="molecule type" value="Genomic_DNA"/>
</dbReference>
<dbReference type="RefSeq" id="WP_002210453.1">
    <property type="nucleotide sequence ID" value="NZ_ACNQ01000006.1"/>
</dbReference>
<dbReference type="SMR" id="Q1CMP5"/>
<dbReference type="GeneID" id="57974079"/>
<dbReference type="KEGG" id="ypn:YPN_0403"/>
<dbReference type="HOGENOM" id="CLU_022158_0_1_6"/>
<dbReference type="UniPathway" id="UPA00048">
    <property type="reaction ID" value="UER00070"/>
</dbReference>
<dbReference type="Proteomes" id="UP000008936">
    <property type="component" value="Chromosome"/>
</dbReference>
<dbReference type="GO" id="GO:0005829">
    <property type="term" value="C:cytosol"/>
    <property type="evidence" value="ECO:0007669"/>
    <property type="project" value="TreeGrafter"/>
</dbReference>
<dbReference type="GO" id="GO:0003852">
    <property type="term" value="F:2-isopropylmalate synthase activity"/>
    <property type="evidence" value="ECO:0007669"/>
    <property type="project" value="UniProtKB-UniRule"/>
</dbReference>
<dbReference type="GO" id="GO:0003985">
    <property type="term" value="F:acetyl-CoA C-acetyltransferase activity"/>
    <property type="evidence" value="ECO:0007669"/>
    <property type="project" value="UniProtKB-UniRule"/>
</dbReference>
<dbReference type="GO" id="GO:0030145">
    <property type="term" value="F:manganese ion binding"/>
    <property type="evidence" value="ECO:0007669"/>
    <property type="project" value="UniProtKB-UniRule"/>
</dbReference>
<dbReference type="GO" id="GO:0009098">
    <property type="term" value="P:L-leucine biosynthetic process"/>
    <property type="evidence" value="ECO:0007669"/>
    <property type="project" value="UniProtKB-UniRule"/>
</dbReference>
<dbReference type="CDD" id="cd07940">
    <property type="entry name" value="DRE_TIM_IPMS"/>
    <property type="match status" value="1"/>
</dbReference>
<dbReference type="FunFam" id="1.10.238.260:FF:000001">
    <property type="entry name" value="2-isopropylmalate synthase"/>
    <property type="match status" value="1"/>
</dbReference>
<dbReference type="FunFam" id="3.20.20.70:FF:000010">
    <property type="entry name" value="2-isopropylmalate synthase"/>
    <property type="match status" value="1"/>
</dbReference>
<dbReference type="FunFam" id="3.30.160.270:FF:000001">
    <property type="entry name" value="2-isopropylmalate synthase"/>
    <property type="match status" value="1"/>
</dbReference>
<dbReference type="Gene3D" id="1.10.238.260">
    <property type="match status" value="1"/>
</dbReference>
<dbReference type="Gene3D" id="3.30.160.270">
    <property type="match status" value="1"/>
</dbReference>
<dbReference type="Gene3D" id="3.20.20.70">
    <property type="entry name" value="Aldolase class I"/>
    <property type="match status" value="1"/>
</dbReference>
<dbReference type="HAMAP" id="MF_01025">
    <property type="entry name" value="LeuA_type1"/>
    <property type="match status" value="1"/>
</dbReference>
<dbReference type="InterPro" id="IPR050073">
    <property type="entry name" value="2-IPM_HCS-like"/>
</dbReference>
<dbReference type="InterPro" id="IPR013709">
    <property type="entry name" value="2-isopropylmalate_synth_dimer"/>
</dbReference>
<dbReference type="InterPro" id="IPR002034">
    <property type="entry name" value="AIPM/Hcit_synth_CS"/>
</dbReference>
<dbReference type="InterPro" id="IPR013785">
    <property type="entry name" value="Aldolase_TIM"/>
</dbReference>
<dbReference type="InterPro" id="IPR054691">
    <property type="entry name" value="LeuA/HCS_post-cat"/>
</dbReference>
<dbReference type="InterPro" id="IPR036230">
    <property type="entry name" value="LeuA_allosteric_dom_sf"/>
</dbReference>
<dbReference type="InterPro" id="IPR005671">
    <property type="entry name" value="LeuA_bact_synth"/>
</dbReference>
<dbReference type="InterPro" id="IPR000891">
    <property type="entry name" value="PYR_CT"/>
</dbReference>
<dbReference type="NCBIfam" id="TIGR00973">
    <property type="entry name" value="leuA_bact"/>
    <property type="match status" value="1"/>
</dbReference>
<dbReference type="NCBIfam" id="NF002084">
    <property type="entry name" value="PRK00915.1-1"/>
    <property type="match status" value="1"/>
</dbReference>
<dbReference type="NCBIfam" id="NF002086">
    <property type="entry name" value="PRK00915.1-3"/>
    <property type="match status" value="1"/>
</dbReference>
<dbReference type="PANTHER" id="PTHR10277:SF9">
    <property type="entry name" value="2-ISOPROPYLMALATE SYNTHASE 1, CHLOROPLASTIC-RELATED"/>
    <property type="match status" value="1"/>
</dbReference>
<dbReference type="PANTHER" id="PTHR10277">
    <property type="entry name" value="HOMOCITRATE SYNTHASE-RELATED"/>
    <property type="match status" value="1"/>
</dbReference>
<dbReference type="Pfam" id="PF22617">
    <property type="entry name" value="HCS_D2"/>
    <property type="match status" value="1"/>
</dbReference>
<dbReference type="Pfam" id="PF00682">
    <property type="entry name" value="HMGL-like"/>
    <property type="match status" value="1"/>
</dbReference>
<dbReference type="Pfam" id="PF08502">
    <property type="entry name" value="LeuA_dimer"/>
    <property type="match status" value="1"/>
</dbReference>
<dbReference type="SMART" id="SM00917">
    <property type="entry name" value="LeuA_dimer"/>
    <property type="match status" value="1"/>
</dbReference>
<dbReference type="SUPFAM" id="SSF110921">
    <property type="entry name" value="2-isopropylmalate synthase LeuA, allosteric (dimerisation) domain"/>
    <property type="match status" value="1"/>
</dbReference>
<dbReference type="SUPFAM" id="SSF51569">
    <property type="entry name" value="Aldolase"/>
    <property type="match status" value="1"/>
</dbReference>
<dbReference type="PROSITE" id="PS00815">
    <property type="entry name" value="AIPM_HOMOCIT_SYNTH_1"/>
    <property type="match status" value="1"/>
</dbReference>
<dbReference type="PROSITE" id="PS00816">
    <property type="entry name" value="AIPM_HOMOCIT_SYNTH_2"/>
    <property type="match status" value="1"/>
</dbReference>
<dbReference type="PROSITE" id="PS50991">
    <property type="entry name" value="PYR_CT"/>
    <property type="match status" value="1"/>
</dbReference>
<feature type="chain" id="PRO_1000149343" description="2-isopropylmalate synthase">
    <location>
        <begin position="1"/>
        <end position="520"/>
    </location>
</feature>
<feature type="domain" description="Pyruvate carboxyltransferase" evidence="1">
    <location>
        <begin position="5"/>
        <end position="267"/>
    </location>
</feature>
<feature type="region of interest" description="Regulatory domain" evidence="1">
    <location>
        <begin position="392"/>
        <end position="520"/>
    </location>
</feature>
<feature type="binding site" evidence="1">
    <location>
        <position position="14"/>
    </location>
    <ligand>
        <name>Mn(2+)</name>
        <dbReference type="ChEBI" id="CHEBI:29035"/>
    </ligand>
</feature>
<feature type="binding site" evidence="1">
    <location>
        <position position="202"/>
    </location>
    <ligand>
        <name>Mn(2+)</name>
        <dbReference type="ChEBI" id="CHEBI:29035"/>
    </ligand>
</feature>
<feature type="binding site" evidence="1">
    <location>
        <position position="204"/>
    </location>
    <ligand>
        <name>Mn(2+)</name>
        <dbReference type="ChEBI" id="CHEBI:29035"/>
    </ligand>
</feature>
<feature type="binding site" evidence="1">
    <location>
        <position position="238"/>
    </location>
    <ligand>
        <name>Mn(2+)</name>
        <dbReference type="ChEBI" id="CHEBI:29035"/>
    </ligand>
</feature>
<name>LEU1_YERPN</name>
<accession>Q1CMP5</accession>
<keyword id="KW-0028">Amino-acid biosynthesis</keyword>
<keyword id="KW-0100">Branched-chain amino acid biosynthesis</keyword>
<keyword id="KW-0963">Cytoplasm</keyword>
<keyword id="KW-0432">Leucine biosynthesis</keyword>
<keyword id="KW-0464">Manganese</keyword>
<keyword id="KW-0479">Metal-binding</keyword>
<keyword id="KW-0808">Transferase</keyword>
<protein>
    <recommendedName>
        <fullName evidence="1">2-isopropylmalate synthase</fullName>
        <ecNumber evidence="1">2.3.3.13</ecNumber>
    </recommendedName>
    <alternativeName>
        <fullName evidence="1">Alpha-IPM synthase</fullName>
    </alternativeName>
    <alternativeName>
        <fullName evidence="1">Alpha-isopropylmalate synthase</fullName>
    </alternativeName>
</protein>
<evidence type="ECO:0000255" key="1">
    <source>
        <dbReference type="HAMAP-Rule" id="MF_01025"/>
    </source>
</evidence>
<reference key="1">
    <citation type="journal article" date="2006" name="J. Bacteriol.">
        <title>Complete genome sequence of Yersinia pestis strains Antiqua and Nepal516: evidence of gene reduction in an emerging pathogen.</title>
        <authorList>
            <person name="Chain P.S.G."/>
            <person name="Hu P."/>
            <person name="Malfatti S.A."/>
            <person name="Radnedge L."/>
            <person name="Larimer F."/>
            <person name="Vergez L.M."/>
            <person name="Worsham P."/>
            <person name="Chu M.C."/>
            <person name="Andersen G.L."/>
        </authorList>
    </citation>
    <scope>NUCLEOTIDE SEQUENCE [LARGE SCALE GENOMIC DNA]</scope>
    <source>
        <strain>Nepal516</strain>
    </source>
</reference>
<reference key="2">
    <citation type="submission" date="2009-04" db="EMBL/GenBank/DDBJ databases">
        <title>Yersinia pestis Nepal516A whole genome shotgun sequencing project.</title>
        <authorList>
            <person name="Plunkett G. III"/>
            <person name="Anderson B.D."/>
            <person name="Baumler D.J."/>
            <person name="Burland V."/>
            <person name="Cabot E.L."/>
            <person name="Glasner J.D."/>
            <person name="Mau B."/>
            <person name="Neeno-Eckwall E."/>
            <person name="Perna N.T."/>
            <person name="Munk A.C."/>
            <person name="Tapia R."/>
            <person name="Green L.D."/>
            <person name="Rogers Y.C."/>
            <person name="Detter J.C."/>
            <person name="Bruce D.C."/>
            <person name="Brettin T.S."/>
        </authorList>
    </citation>
    <scope>NUCLEOTIDE SEQUENCE [LARGE SCALE GENOMIC DNA]</scope>
    <source>
        <strain>Nepal516</strain>
    </source>
</reference>
<gene>
    <name evidence="1" type="primary">leuA</name>
    <name type="ordered locus">YPN_0403</name>
    <name type="ORF">YP516_0414</name>
</gene>
<organism>
    <name type="scientific">Yersinia pestis bv. Antiqua (strain Nepal516)</name>
    <dbReference type="NCBI Taxonomy" id="377628"/>
    <lineage>
        <taxon>Bacteria</taxon>
        <taxon>Pseudomonadati</taxon>
        <taxon>Pseudomonadota</taxon>
        <taxon>Gammaproteobacteria</taxon>
        <taxon>Enterobacterales</taxon>
        <taxon>Yersiniaceae</taxon>
        <taxon>Yersinia</taxon>
    </lineage>
</organism>
<comment type="function">
    <text evidence="1">Catalyzes the condensation of the acetyl group of acetyl-CoA with 3-methyl-2-oxobutanoate (2-ketoisovalerate) to form 3-carboxy-3-hydroxy-4-methylpentanoate (2-isopropylmalate).</text>
</comment>
<comment type="catalytic activity">
    <reaction evidence="1">
        <text>3-methyl-2-oxobutanoate + acetyl-CoA + H2O = (2S)-2-isopropylmalate + CoA + H(+)</text>
        <dbReference type="Rhea" id="RHEA:21524"/>
        <dbReference type="ChEBI" id="CHEBI:1178"/>
        <dbReference type="ChEBI" id="CHEBI:11851"/>
        <dbReference type="ChEBI" id="CHEBI:15377"/>
        <dbReference type="ChEBI" id="CHEBI:15378"/>
        <dbReference type="ChEBI" id="CHEBI:57287"/>
        <dbReference type="ChEBI" id="CHEBI:57288"/>
        <dbReference type="EC" id="2.3.3.13"/>
    </reaction>
</comment>
<comment type="cofactor">
    <cofactor evidence="1">
        <name>Mn(2+)</name>
        <dbReference type="ChEBI" id="CHEBI:29035"/>
    </cofactor>
</comment>
<comment type="pathway">
    <text evidence="1">Amino-acid biosynthesis; L-leucine biosynthesis; L-leucine from 3-methyl-2-oxobutanoate: step 1/4.</text>
</comment>
<comment type="subunit">
    <text evidence="1">Homodimer.</text>
</comment>
<comment type="subcellular location">
    <subcellularLocation>
        <location evidence="1">Cytoplasm</location>
    </subcellularLocation>
</comment>
<comment type="similarity">
    <text evidence="1">Belongs to the alpha-IPM synthase/homocitrate synthase family. LeuA type 1 subfamily.</text>
</comment>
<sequence>MSQQVIIFDTTLRDGEQALQASLSVKEKLQIALALERMGVDIMEVGFPVSSPGDFESVRTIAQQVKNSRVCALARCVDKDIDVAAEALRIAEAFRIHVFLATSTLHIESKLKRSFDDVLAMAVHSVKRARNYTDDVEFSCEDAGRTPIDNLCRVVEAAITAGATTINIPDTVGYTTPYQFGGIITDLYERVPNIDKAIISVHCHDDLGMSVANSITAVQAGARQVEGTINGLGERAGNCSLEEVIMAIKVRHEMLGVHTNINHQEIYRTSQLVSKICNMPIPGNKAIVGSNAFAHSSGIHQDGVLKNRENYEIMTPESIGLKEVQLNLTSRSGRAAVKHRMEEMGYQDKDYNLDSLYDAFLKLADKKGQVFDYDLEALAFINKQQEEPEYYRLDYFSVQSGSSVMATASVKLVCGEEIKSEAATGNGPVDAVYQAINRITDYPIELVKYQLSAKGQGKDALGQVDIVVDHKGRRFHGVGLATDIVESSAKALVHVLNNIWRAHQVEKEKQRLQQNNQEMV</sequence>